<accession>B1XD25</accession>
<feature type="chain" id="PRO_1000137297" description="H(+)/Cl(-) exchange transporter ClcA">
    <location>
        <begin position="1"/>
        <end position="473"/>
    </location>
</feature>
<feature type="topological domain" description="Cytoplasmic" evidence="1">
    <location>
        <begin position="1"/>
        <end position="32"/>
    </location>
</feature>
<feature type="transmembrane region" description="Helical" evidence="1">
    <location>
        <begin position="33"/>
        <end position="69"/>
    </location>
</feature>
<feature type="topological domain" description="Periplasmic" evidence="1">
    <location>
        <begin position="70"/>
        <end position="76"/>
    </location>
</feature>
<feature type="transmembrane region" description="Helical" evidence="1">
    <location>
        <begin position="77"/>
        <end position="100"/>
    </location>
</feature>
<feature type="intramembrane region" description="Helical" evidence="1">
    <location>
        <begin position="109"/>
        <end position="116"/>
    </location>
</feature>
<feature type="topological domain" description="Cytoplasmic" evidence="1">
    <location>
        <begin position="117"/>
        <end position="123"/>
    </location>
</feature>
<feature type="transmembrane region" description="Helical" evidence="1">
    <location>
        <begin position="124"/>
        <end position="141"/>
    </location>
</feature>
<feature type="transmembrane region" description="Helical" evidence="1">
    <location>
        <begin position="148"/>
        <end position="166"/>
    </location>
</feature>
<feature type="topological domain" description="Cytoplasmic" evidence="1">
    <location>
        <begin position="167"/>
        <end position="176"/>
    </location>
</feature>
<feature type="intramembrane region" description="Helical" evidence="1">
    <location>
        <begin position="177"/>
        <end position="189"/>
    </location>
</feature>
<feature type="intramembrane region" description="Helical" evidence="1">
    <location>
        <begin position="193"/>
        <end position="201"/>
    </location>
</feature>
<feature type="topological domain" description="Cytoplasmic" evidence="1">
    <location>
        <begin position="202"/>
        <end position="214"/>
    </location>
</feature>
<feature type="transmembrane region" description="Helical" evidence="1">
    <location>
        <begin position="215"/>
        <end position="232"/>
    </location>
</feature>
<feature type="topological domain" description="Periplasmic" evidence="1">
    <location>
        <begin position="233"/>
        <end position="252"/>
    </location>
</feature>
<feature type="transmembrane region" description="Helical" evidence="1">
    <location>
        <begin position="253"/>
        <end position="281"/>
    </location>
</feature>
<feature type="topological domain" description="Cytoplasmic" evidence="1">
    <location>
        <begin position="282"/>
        <end position="287"/>
    </location>
</feature>
<feature type="transmembrane region" description="Helical" evidence="1">
    <location>
        <begin position="288"/>
        <end position="309"/>
    </location>
</feature>
<feature type="topological domain" description="Periplasmic" evidence="1">
    <location>
        <begin position="310"/>
        <end position="329"/>
    </location>
</feature>
<feature type="transmembrane region" description="Helical" evidence="1">
    <location>
        <begin position="330"/>
        <end position="349"/>
    </location>
</feature>
<feature type="transmembrane region" description="Helical" evidence="1">
    <location>
        <begin position="355"/>
        <end position="376"/>
    </location>
</feature>
<feature type="topological domain" description="Periplasmic" evidence="1">
    <location>
        <begin position="377"/>
        <end position="386"/>
    </location>
</feature>
<feature type="intramembrane region" description="Helical" evidence="1">
    <location>
        <begin position="387"/>
        <end position="401"/>
    </location>
</feature>
<feature type="intramembrane region" description="Note=Loop between two helices" evidence="1">
    <location>
        <begin position="402"/>
        <end position="404"/>
    </location>
</feature>
<feature type="intramembrane region" description="Helical" evidence="1">
    <location>
        <begin position="405"/>
        <end position="416"/>
    </location>
</feature>
<feature type="intramembrane region" description="Note=Loop between two helices" evidence="1">
    <location>
        <begin position="417"/>
        <end position="421"/>
    </location>
</feature>
<feature type="transmembrane region" description="Helical" evidence="1">
    <location>
        <begin position="422"/>
        <end position="438"/>
    </location>
</feature>
<feature type="topological domain" description="Cytoplasmic" evidence="1">
    <location>
        <begin position="439"/>
        <end position="473"/>
    </location>
</feature>
<feature type="short sequence motif" description="Selectivity filter part_1" evidence="1">
    <location>
        <begin position="106"/>
        <end position="110"/>
    </location>
</feature>
<feature type="short sequence motif" description="Selectivity filter part_2" evidence="1">
    <location>
        <begin position="146"/>
        <end position="150"/>
    </location>
</feature>
<feature type="short sequence motif" description="Selectivity filter part_3" evidence="1">
    <location>
        <begin position="355"/>
        <end position="359"/>
    </location>
</feature>
<feature type="binding site" evidence="1">
    <location>
        <position position="107"/>
    </location>
    <ligand>
        <name>chloride</name>
        <dbReference type="ChEBI" id="CHEBI:17996"/>
    </ligand>
</feature>
<feature type="binding site" evidence="1">
    <location>
        <position position="356"/>
    </location>
    <ligand>
        <name>chloride</name>
        <dbReference type="ChEBI" id="CHEBI:17996"/>
    </ligand>
</feature>
<feature type="binding site" evidence="1">
    <location>
        <position position="357"/>
    </location>
    <ligand>
        <name>chloride</name>
        <dbReference type="ChEBI" id="CHEBI:17996"/>
    </ligand>
</feature>
<feature type="binding site" evidence="1">
    <location>
        <position position="445"/>
    </location>
    <ligand>
        <name>chloride</name>
        <dbReference type="ChEBI" id="CHEBI:17996"/>
    </ligand>
</feature>
<feature type="site" description="Mediates proton transfer from the outer aqueous phase to the interior of the protein; involved in linking H(+) and Cl(-) transport" evidence="1">
    <location>
        <position position="148"/>
    </location>
</feature>
<feature type="site" description="Mediates proton transfer from the protein to the inner aqueous phase" evidence="1">
    <location>
        <position position="203"/>
    </location>
</feature>
<comment type="function">
    <text evidence="1">Proton-coupled chloride transporter. Functions as antiport system and exchanges two chloride ions for 1 proton. Probably acts as an electrical shunt for an outwardly-directed proton pump that is linked to amino acid decarboxylation, as part of the extreme acid resistance (XAR) response.</text>
</comment>
<comment type="catalytic activity">
    <reaction evidence="1">
        <text>2 chloride(in) + H(+)(out) = 2 chloride(out) + H(+)(in)</text>
        <dbReference type="Rhea" id="RHEA:29567"/>
        <dbReference type="ChEBI" id="CHEBI:15378"/>
        <dbReference type="ChEBI" id="CHEBI:17996"/>
    </reaction>
</comment>
<comment type="subunit">
    <text evidence="1">Homodimer.</text>
</comment>
<comment type="subcellular location">
    <subcellularLocation>
        <location evidence="1">Cell inner membrane</location>
        <topology evidence="1">Multi-pass membrane protein</topology>
    </subcellularLocation>
</comment>
<comment type="similarity">
    <text evidence="1">Belongs to the chloride channel (TC 2.A.49) family. ClcA subfamily.</text>
</comment>
<name>CLCA_ECODH</name>
<proteinExistence type="inferred from homology"/>
<sequence>MKTDTPSLETPQAARLRRRQLIRQLLERDKTPLAILFMAAVVGTLVGLAAVAFDKGVAWLQNQRMGALVHTADNYPLLLTVAFLCSAVLAMFGYFLVRKYAPEAGGSGIPEIEGALEDQRPVRWWRVLPVKFFGGLGTLGGGMVLGREGPTVQIGGNIGRMVLDIFRLKGDEARHTLLATGAAAGLAAAFNAPLAGILFIIEEMRPQFRYTLISIKAVFIGVIMSTIMYRIFNHEVALIDVGKLSDAPLNTLWLYLILGIIFGIFGPIFNKWVLGMQDLLHRVHGGNITKWVLMGGAIGGLCGLLGFVAPATSGGGFNLIPIATAGNFSMGMLVFIFVARVITTLLCFSSGAPGGIFAPMLALGTVLGTAFGMVAVELFPQYHLEAGTFAIAGMGALLAASIRAPLTGIILVLEMTDNYQLILPMIITGLGATLLAQFTGGKPLYSAILARTLAKQEAEQLARSKAASASENT</sequence>
<evidence type="ECO:0000255" key="1">
    <source>
        <dbReference type="HAMAP-Rule" id="MF_01128"/>
    </source>
</evidence>
<gene>
    <name evidence="1" type="primary">clcA</name>
    <name evidence="1" type="synonym">eriC</name>
    <name type="ordered locus">ECDH10B_0135</name>
</gene>
<reference key="1">
    <citation type="journal article" date="2008" name="J. Bacteriol.">
        <title>The complete genome sequence of Escherichia coli DH10B: insights into the biology of a laboratory workhorse.</title>
        <authorList>
            <person name="Durfee T."/>
            <person name="Nelson R."/>
            <person name="Baldwin S."/>
            <person name="Plunkett G. III"/>
            <person name="Burland V."/>
            <person name="Mau B."/>
            <person name="Petrosino J.F."/>
            <person name="Qin X."/>
            <person name="Muzny D.M."/>
            <person name="Ayele M."/>
            <person name="Gibbs R.A."/>
            <person name="Csorgo B."/>
            <person name="Posfai G."/>
            <person name="Weinstock G.M."/>
            <person name="Blattner F.R."/>
        </authorList>
    </citation>
    <scope>NUCLEOTIDE SEQUENCE [LARGE SCALE GENOMIC DNA]</scope>
    <source>
        <strain>K12 / DH10B</strain>
    </source>
</reference>
<organism>
    <name type="scientific">Escherichia coli (strain K12 / DH10B)</name>
    <dbReference type="NCBI Taxonomy" id="316385"/>
    <lineage>
        <taxon>Bacteria</taxon>
        <taxon>Pseudomonadati</taxon>
        <taxon>Pseudomonadota</taxon>
        <taxon>Gammaproteobacteria</taxon>
        <taxon>Enterobacterales</taxon>
        <taxon>Enterobacteriaceae</taxon>
        <taxon>Escherichia</taxon>
    </lineage>
</organism>
<protein>
    <recommendedName>
        <fullName evidence="1">H(+)/Cl(-) exchange transporter ClcA</fullName>
    </recommendedName>
</protein>
<keyword id="KW-0050">Antiport</keyword>
<keyword id="KW-0997">Cell inner membrane</keyword>
<keyword id="KW-1003">Cell membrane</keyword>
<keyword id="KW-0868">Chloride</keyword>
<keyword id="KW-0406">Ion transport</keyword>
<keyword id="KW-0472">Membrane</keyword>
<keyword id="KW-0812">Transmembrane</keyword>
<keyword id="KW-1133">Transmembrane helix</keyword>
<keyword id="KW-0813">Transport</keyword>
<dbReference type="EMBL" id="CP000948">
    <property type="protein sequence ID" value="ACB01334.1"/>
    <property type="molecule type" value="Genomic_DNA"/>
</dbReference>
<dbReference type="RefSeq" id="WP_000845394.1">
    <property type="nucleotide sequence ID" value="NC_010473.1"/>
</dbReference>
<dbReference type="SMR" id="B1XD25"/>
<dbReference type="GeneID" id="93777272"/>
<dbReference type="KEGG" id="ecd:ECDH10B_0135"/>
<dbReference type="HOGENOM" id="CLU_015263_7_0_6"/>
<dbReference type="GO" id="GO:0005886">
    <property type="term" value="C:plasma membrane"/>
    <property type="evidence" value="ECO:0007669"/>
    <property type="project" value="UniProtKB-SubCell"/>
</dbReference>
<dbReference type="GO" id="GO:0015297">
    <property type="term" value="F:antiporter activity"/>
    <property type="evidence" value="ECO:0007669"/>
    <property type="project" value="UniProtKB-UniRule"/>
</dbReference>
<dbReference type="GO" id="GO:0005247">
    <property type="term" value="F:voltage-gated chloride channel activity"/>
    <property type="evidence" value="ECO:0007669"/>
    <property type="project" value="TreeGrafter"/>
</dbReference>
<dbReference type="CDD" id="cd01031">
    <property type="entry name" value="EriC"/>
    <property type="match status" value="1"/>
</dbReference>
<dbReference type="FunFam" id="1.10.3080.10:FF:000005">
    <property type="entry name" value="H(+)/Cl(-) exchange transporter ClcA"/>
    <property type="match status" value="1"/>
</dbReference>
<dbReference type="Gene3D" id="1.10.3080.10">
    <property type="entry name" value="Clc chloride channel"/>
    <property type="match status" value="1"/>
</dbReference>
<dbReference type="HAMAP" id="MF_01128">
    <property type="entry name" value="CLC_ClcA"/>
    <property type="match status" value="1"/>
</dbReference>
<dbReference type="InterPro" id="IPR023861">
    <property type="entry name" value="Cl-channel_ClcA"/>
</dbReference>
<dbReference type="InterPro" id="IPR014743">
    <property type="entry name" value="Cl-channel_core"/>
</dbReference>
<dbReference type="InterPro" id="IPR001807">
    <property type="entry name" value="ClC"/>
</dbReference>
<dbReference type="NCBIfam" id="NF003640">
    <property type="entry name" value="PRK05277.1"/>
    <property type="match status" value="1"/>
</dbReference>
<dbReference type="PANTHER" id="PTHR45711">
    <property type="entry name" value="CHLORIDE CHANNEL PROTEIN"/>
    <property type="match status" value="1"/>
</dbReference>
<dbReference type="PANTHER" id="PTHR45711:SF6">
    <property type="entry name" value="CHLORIDE CHANNEL PROTEIN"/>
    <property type="match status" value="1"/>
</dbReference>
<dbReference type="Pfam" id="PF00654">
    <property type="entry name" value="Voltage_CLC"/>
    <property type="match status" value="1"/>
</dbReference>
<dbReference type="PRINTS" id="PR00762">
    <property type="entry name" value="CLCHANNEL"/>
</dbReference>
<dbReference type="SUPFAM" id="SSF81340">
    <property type="entry name" value="Clc chloride channel"/>
    <property type="match status" value="1"/>
</dbReference>